<name>DDX1_DROVI</name>
<accession>Q24731</accession>
<dbReference type="EC" id="3.6.4.13"/>
<dbReference type="EMBL" id="U34779">
    <property type="protein sequence ID" value="AAC47310.1"/>
    <property type="molecule type" value="Genomic_DNA"/>
</dbReference>
<dbReference type="SMR" id="Q24731"/>
<dbReference type="OrthoDB" id="1735at2759"/>
<dbReference type="GO" id="GO:0005634">
    <property type="term" value="C:nucleus"/>
    <property type="evidence" value="ECO:0000250"/>
    <property type="project" value="UniProtKB"/>
</dbReference>
<dbReference type="GO" id="GO:0005524">
    <property type="term" value="F:ATP binding"/>
    <property type="evidence" value="ECO:0007669"/>
    <property type="project" value="UniProtKB-KW"/>
</dbReference>
<dbReference type="GO" id="GO:0016887">
    <property type="term" value="F:ATP hydrolysis activity"/>
    <property type="evidence" value="ECO:0007669"/>
    <property type="project" value="RHEA"/>
</dbReference>
<dbReference type="GO" id="GO:0003682">
    <property type="term" value="F:chromatin binding"/>
    <property type="evidence" value="ECO:0000250"/>
    <property type="project" value="UniProtKB"/>
</dbReference>
<dbReference type="GO" id="GO:0033677">
    <property type="term" value="F:DNA/RNA helicase activity"/>
    <property type="evidence" value="ECO:0000250"/>
    <property type="project" value="UniProtKB"/>
</dbReference>
<dbReference type="GO" id="GO:0004527">
    <property type="term" value="F:exonuclease activity"/>
    <property type="evidence" value="ECO:0007669"/>
    <property type="project" value="UniProtKB-KW"/>
</dbReference>
<dbReference type="GO" id="GO:0004518">
    <property type="term" value="F:nuclease activity"/>
    <property type="evidence" value="ECO:0000250"/>
    <property type="project" value="UniProtKB"/>
</dbReference>
<dbReference type="GO" id="GO:0008143">
    <property type="term" value="F:poly(A) binding"/>
    <property type="evidence" value="ECO:0000250"/>
    <property type="project" value="UniProtKB"/>
</dbReference>
<dbReference type="GO" id="GO:0003724">
    <property type="term" value="F:RNA helicase activity"/>
    <property type="evidence" value="ECO:0000250"/>
    <property type="project" value="UniProtKB"/>
</dbReference>
<dbReference type="GO" id="GO:0003712">
    <property type="term" value="F:transcription coregulator activity"/>
    <property type="evidence" value="ECO:0000250"/>
    <property type="project" value="UniProtKB"/>
</dbReference>
<dbReference type="GO" id="GO:0006302">
    <property type="term" value="P:double-strand break repair"/>
    <property type="evidence" value="ECO:0000250"/>
    <property type="project" value="UniProtKB"/>
</dbReference>
<dbReference type="GO" id="GO:0001700">
    <property type="term" value="P:embryonic development via the syncytial blastoderm"/>
    <property type="evidence" value="ECO:0000250"/>
    <property type="project" value="UniProtKB"/>
</dbReference>
<dbReference type="GO" id="GO:0048477">
    <property type="term" value="P:oogenesis"/>
    <property type="evidence" value="ECO:0007669"/>
    <property type="project" value="EnsemblMetazoa"/>
</dbReference>
<dbReference type="GO" id="GO:0007283">
    <property type="term" value="P:spermatogenesis"/>
    <property type="evidence" value="ECO:0007669"/>
    <property type="project" value="EnsemblMetazoa"/>
</dbReference>
<dbReference type="GO" id="GO:0008033">
    <property type="term" value="P:tRNA processing"/>
    <property type="evidence" value="ECO:0007669"/>
    <property type="project" value="EnsemblMetazoa"/>
</dbReference>
<dbReference type="CDD" id="cd18787">
    <property type="entry name" value="SF2_C_DEAD"/>
    <property type="match status" value="1"/>
</dbReference>
<dbReference type="FunFam" id="3.40.50.300:FF:000708">
    <property type="entry name" value="ATP-dependent RNA helicase DDX1"/>
    <property type="match status" value="1"/>
</dbReference>
<dbReference type="Gene3D" id="3.40.50.300">
    <property type="entry name" value="P-loop containing nucleotide triphosphate hydrolases"/>
    <property type="match status" value="2"/>
</dbReference>
<dbReference type="InterPro" id="IPR001650">
    <property type="entry name" value="Helicase_C-like"/>
</dbReference>
<dbReference type="InterPro" id="IPR027417">
    <property type="entry name" value="P-loop_NTPase"/>
</dbReference>
<dbReference type="PANTHER" id="PTHR24031">
    <property type="entry name" value="RNA HELICASE"/>
    <property type="match status" value="1"/>
</dbReference>
<dbReference type="Pfam" id="PF00271">
    <property type="entry name" value="Helicase_C"/>
    <property type="match status" value="1"/>
</dbReference>
<dbReference type="SMART" id="SM00490">
    <property type="entry name" value="HELICc"/>
    <property type="match status" value="1"/>
</dbReference>
<dbReference type="SUPFAM" id="SSF52540">
    <property type="entry name" value="P-loop containing nucleoside triphosphate hydrolases"/>
    <property type="match status" value="1"/>
</dbReference>
<dbReference type="PROSITE" id="PS51192">
    <property type="entry name" value="HELICASE_ATP_BIND_1"/>
    <property type="match status" value="1"/>
</dbReference>
<dbReference type="PROSITE" id="PS51194">
    <property type="entry name" value="HELICASE_CTER"/>
    <property type="match status" value="1"/>
</dbReference>
<keyword id="KW-0067">ATP-binding</keyword>
<keyword id="KW-0269">Exonuclease</keyword>
<keyword id="KW-0347">Helicase</keyword>
<keyword id="KW-0378">Hydrolase</keyword>
<keyword id="KW-0540">Nuclease</keyword>
<keyword id="KW-0547">Nucleotide-binding</keyword>
<keyword id="KW-0694">RNA-binding</keyword>
<organism>
    <name type="scientific">Drosophila virilis</name>
    <name type="common">Fruit fly</name>
    <dbReference type="NCBI Taxonomy" id="7244"/>
    <lineage>
        <taxon>Eukaryota</taxon>
        <taxon>Metazoa</taxon>
        <taxon>Ecdysozoa</taxon>
        <taxon>Arthropoda</taxon>
        <taxon>Hexapoda</taxon>
        <taxon>Insecta</taxon>
        <taxon>Pterygota</taxon>
        <taxon>Neoptera</taxon>
        <taxon>Endopterygota</taxon>
        <taxon>Diptera</taxon>
        <taxon>Brachycera</taxon>
        <taxon>Muscomorpha</taxon>
        <taxon>Ephydroidea</taxon>
        <taxon>Drosophilidae</taxon>
        <taxon>Drosophila</taxon>
    </lineage>
</organism>
<reference evidence="4" key="1">
    <citation type="journal article" date="1996" name="Gene">
        <title>A Drosophila melanogaster homologue of the human DEAD-box gene DDX1.</title>
        <authorList>
            <person name="Rafti F."/>
            <person name="Scarvelis D."/>
            <person name="Lasko P.F."/>
        </authorList>
    </citation>
    <scope>NUCLEOTIDE SEQUENCE [GENOMIC DNA]</scope>
    <source>
        <tissue>Embryo</tissue>
    </source>
</reference>
<protein>
    <recommendedName>
        <fullName>ATP-dependent RNA helicase Ddx1</fullName>
        <ecNumber>3.6.4.13</ecNumber>
    </recommendedName>
    <alternativeName>
        <fullName>DEAD box protein 1</fullName>
    </alternativeName>
</protein>
<proteinExistence type="inferred from homology"/>
<evidence type="ECO:0000250" key="1"/>
<evidence type="ECO:0000255" key="2">
    <source>
        <dbReference type="PROSITE-ProRule" id="PRU00541"/>
    </source>
</evidence>
<evidence type="ECO:0000255" key="3">
    <source>
        <dbReference type="PROSITE-ProRule" id="PRU00542"/>
    </source>
</evidence>
<evidence type="ECO:0000305" key="4"/>
<comment type="function">
    <text evidence="1">Acts as an ATP-dependent RNA helicase, able to unwind both RNA-RNA and RNA-DNA duplexes. Possesses 5' single-stranded RNA overhang nuclease activity (By similarity).</text>
</comment>
<comment type="catalytic activity">
    <reaction>
        <text>ATP + H2O = ADP + phosphate + H(+)</text>
        <dbReference type="Rhea" id="RHEA:13065"/>
        <dbReference type="ChEBI" id="CHEBI:15377"/>
        <dbReference type="ChEBI" id="CHEBI:15378"/>
        <dbReference type="ChEBI" id="CHEBI:30616"/>
        <dbReference type="ChEBI" id="CHEBI:43474"/>
        <dbReference type="ChEBI" id="CHEBI:456216"/>
        <dbReference type="EC" id="3.6.4.13"/>
    </reaction>
</comment>
<comment type="similarity">
    <text evidence="4">Belongs to the DEAD box helicase family. DDX1 subfamily.</text>
</comment>
<sequence>DDEADRLLKQGYTDLIERLHKQIPKITSDGCRLQMIVCSATLHAFEVKKMAERLMHFPTWGDLKGEDAVPETVHHVVCMVDPHTDSSWQQLRQPIHTDGVHDHDNVHPTNQSPETFSQAVKLLKGEYCIRAIDQHKMDRAIIFCRTKQDCDNLEQHLSQRGGQRFSCVCLHGDRKPQERKQNLEMFKRQEVKFLICTDVAARGLDITGLPFSKDLKYLSENTLNFPNLAVINITLPDDKSNYVHRIGRVGRPESMGLAISLVSTVPEKVWYHGEWCKTRGRSGSCIWYNEPNLLAEVEDHLNITIQQVVKSLDVPVNDFDGKVVYGQKNLNMGTGYEDHVEQLGPTVRKQTDLELQSQSLFLKRLKRLNWFDFGLLHDPKYFHGYEYIKYINKLTLKSCV</sequence>
<gene>
    <name type="primary">Ddx1</name>
</gene>
<feature type="chain" id="PRO_0000054990" description="ATP-dependent RNA helicase Ddx1">
    <location>
        <begin position="1" status="less than"/>
        <end position="400"/>
    </location>
</feature>
<feature type="domain" description="Helicase ATP-binding" evidence="2">
    <location>
        <begin position="1" status="less than"/>
        <end position="60"/>
    </location>
</feature>
<feature type="domain" description="Helicase C-terminal" evidence="3">
    <location>
        <begin position="115"/>
        <end position="316"/>
    </location>
</feature>
<feature type="short sequence motif" description="DEAD box">
    <location>
        <begin position="2"/>
        <end position="5"/>
    </location>
</feature>
<feature type="non-terminal residue" evidence="4">
    <location>
        <position position="1"/>
    </location>
</feature>